<name>YL377_MIMIV</name>
<organismHost>
    <name type="scientific">Acanthamoeba polyphaga</name>
    <name type="common">Amoeba</name>
    <dbReference type="NCBI Taxonomy" id="5757"/>
</organismHost>
<organism>
    <name type="scientific">Acanthamoeba polyphaga mimivirus</name>
    <name type="common">APMV</name>
    <dbReference type="NCBI Taxonomy" id="212035"/>
    <lineage>
        <taxon>Viruses</taxon>
        <taxon>Varidnaviria</taxon>
        <taxon>Bamfordvirae</taxon>
        <taxon>Nucleocytoviricota</taxon>
        <taxon>Megaviricetes</taxon>
        <taxon>Imitervirales</taxon>
        <taxon>Mimiviridae</taxon>
        <taxon>Megamimivirinae</taxon>
        <taxon>Mimivirus</taxon>
        <taxon>Mimivirus bradfordmassiliense</taxon>
    </lineage>
</organism>
<gene>
    <name type="ordered locus">MIMI_L377</name>
</gene>
<protein>
    <recommendedName>
        <fullName>Putative ATP-dependent RNA helicase L377</fullName>
        <ecNumber>3.6.4.13</ecNumber>
    </recommendedName>
</protein>
<comment type="catalytic activity">
    <reaction>
        <text>ATP + H2O = ADP + phosphate + H(+)</text>
        <dbReference type="Rhea" id="RHEA:13065"/>
        <dbReference type="ChEBI" id="CHEBI:15377"/>
        <dbReference type="ChEBI" id="CHEBI:15378"/>
        <dbReference type="ChEBI" id="CHEBI:30616"/>
        <dbReference type="ChEBI" id="CHEBI:43474"/>
        <dbReference type="ChEBI" id="CHEBI:456216"/>
        <dbReference type="EC" id="3.6.4.13"/>
    </reaction>
</comment>
<comment type="subcellular location">
    <subcellularLocation>
        <location evidence="2">Virion</location>
    </subcellularLocation>
</comment>
<comment type="similarity">
    <text evidence="3">Belongs to the DEAD box helicase family. DEAH subfamily.</text>
</comment>
<reference key="1">
    <citation type="journal article" date="2004" name="Science">
        <title>The 1.2-megabase genome sequence of Mimivirus.</title>
        <authorList>
            <person name="Raoult D."/>
            <person name="Audic S."/>
            <person name="Robert C."/>
            <person name="Abergel C."/>
            <person name="Renesto P."/>
            <person name="Ogata H."/>
            <person name="La Scola B."/>
            <person name="Susan M."/>
            <person name="Claverie J.-M."/>
        </authorList>
    </citation>
    <scope>NUCLEOTIDE SEQUENCE [GENOMIC DNA]</scope>
    <source>
        <strain>Rowbotham-Bradford</strain>
    </source>
</reference>
<reference key="2">
    <citation type="journal article" date="2006" name="J. Virol.">
        <title>Mimivirus giant particles incorporate a large fraction of anonymous and unique gene products.</title>
        <authorList>
            <person name="Renesto P."/>
            <person name="Abergel C."/>
            <person name="Decloquement P."/>
            <person name="Moinier D."/>
            <person name="Azza S."/>
            <person name="Ogata H."/>
            <person name="Fourquet P."/>
            <person name="Gorvel J.-P."/>
            <person name="Claverie J.-M."/>
            <person name="Raoult D."/>
        </authorList>
    </citation>
    <scope>IDENTIFICATION BY MASS SPECTROMETRY [LARGE SCALE ANALYSIS]</scope>
    <scope>SUBCELLULAR LOCATION</scope>
</reference>
<evidence type="ECO:0000255" key="1">
    <source>
        <dbReference type="PROSITE-ProRule" id="PRU00541"/>
    </source>
</evidence>
<evidence type="ECO:0000269" key="2">
    <source>
    </source>
</evidence>
<evidence type="ECO:0000305" key="3"/>
<accession>Q5UQW0</accession>
<feature type="chain" id="PRO_0000253411" description="Putative ATP-dependent RNA helicase L377">
    <location>
        <begin position="1"/>
        <end position="1147"/>
    </location>
</feature>
<feature type="domain" description="Helicase ATP-binding" evidence="1">
    <location>
        <begin position="108"/>
        <end position="315"/>
    </location>
</feature>
<feature type="short sequence motif" description="DEAH box">
    <location>
        <begin position="264"/>
        <end position="267"/>
    </location>
</feature>
<feature type="binding site" evidence="1">
    <location>
        <begin position="121"/>
        <end position="128"/>
    </location>
    <ligand>
        <name>ATP</name>
        <dbReference type="ChEBI" id="CHEBI:30616"/>
    </ligand>
</feature>
<proteinExistence type="evidence at protein level"/>
<sequence>MKIMEDQINPINIRKQKDLDDNLEEITSENSEIAPADIEKKMLENHAYPSPTQEDFQRAIYVKRDFYIHSIPERKVLNTYDEIKEFRDNKCAGNFKLTESQTLLSNFINPNTPYRGLLMFWGTGVGKSCGAIAIAEKFKHMVEKYGTKIHVLVPGPINKQNFLNEIIKCTGETYTKMFQDKTIVINEAEKNRIRKNALNVVNQYYRIMSYRSFYKKVLGEKIRDKVVTGNKVKLTSRKTETGEFERDISIDRIYSLDNTLLIVDEAHNITGNGEGDAVKKIIDVSKNLKVVFLSATPMKNLADSIVELINYLRPKNYQMERDKIFTSQRGSEMDFKPGGRDYLRKMVRGYVSYLRGADPLTFAERVDIGEIPPGLDFTKVTRCFMLPFQLGVYDNVIATQDDSLDRNSEAVANFVFPGLSKDRNSKNIEGYYGIKGMNEIRNQILNNSETLNRRIASTILSEYEIEDPSNLMYLTDNNSVISGNIFNEKYLKHFSIKFYSALQKINETVYGKRNSGLIFIYLNLVRVGISIFQEVLLMNGYLEYQENTNNYNLKRDTRCYFCDHKYGDHYNLPDDIPKHDFYPATFITVTGKSEEDIEQIPEEKHRILNNVFNNVNNREGKYLKIVIGSRVMNEGITLRNIKEIYILDVHFNLGKVDQAIGRGIRFCTHYGITNEKDPFPKVEVNKYVVSVKNGLSTEEQLYKKAESKYKLIKQVERILQEEAIDCPLNRNGNIFPEEMKRYANCGTKDNPCPAICGYMPCEFKCGDKLLNAKYYDPDRAVYKKITKSELDYSTYNNALASDEIDYSKAKIKEMYKLDFIYTLKDILRYVKKSYPVEKREMFDDFYVYQALNDLIPITGNDFNNFHDTIADKYNRPGYLIYINTYYIFQPFDENENIPMYYRRIFTPPTINKINVKDYIKNTPEYRQHKNLYQLDEEGPIDREYDFDSVQDYYDSRDEFDYVGIIDRESSKRKNGTNSSGDEFKIRRKRPKILSKKRETGIPSFLGAVCSTSKDKKYLASIMKKLNLDENKSDSRMDICDRIKNKLFDLEKYSTNNMTYLIIPSNHPHIPFPLNLKDRVQYIIDQIKRETRSSINPEIKTIKTTGEFNDIDYIYYELYYDSSMDKYQDILTLYGAKKINNDWIIIIK</sequence>
<keyword id="KW-0067">ATP-binding</keyword>
<keyword id="KW-0347">Helicase</keyword>
<keyword id="KW-0378">Hydrolase</keyword>
<keyword id="KW-0547">Nucleotide-binding</keyword>
<keyword id="KW-1185">Reference proteome</keyword>
<keyword id="KW-0946">Virion</keyword>
<dbReference type="EC" id="3.6.4.13"/>
<dbReference type="EMBL" id="AY653733">
    <property type="protein sequence ID" value="AAV50646.1"/>
    <property type="molecule type" value="Genomic_DNA"/>
</dbReference>
<dbReference type="Proteomes" id="UP000001134">
    <property type="component" value="Genome"/>
</dbReference>
<dbReference type="GO" id="GO:0044423">
    <property type="term" value="C:virion component"/>
    <property type="evidence" value="ECO:0007669"/>
    <property type="project" value="UniProtKB-KW"/>
</dbReference>
<dbReference type="GO" id="GO:0005524">
    <property type="term" value="F:ATP binding"/>
    <property type="evidence" value="ECO:0007669"/>
    <property type="project" value="UniProtKB-KW"/>
</dbReference>
<dbReference type="GO" id="GO:0016887">
    <property type="term" value="F:ATP hydrolysis activity"/>
    <property type="evidence" value="ECO:0007669"/>
    <property type="project" value="RHEA"/>
</dbReference>
<dbReference type="GO" id="GO:0003677">
    <property type="term" value="F:DNA binding"/>
    <property type="evidence" value="ECO:0007669"/>
    <property type="project" value="InterPro"/>
</dbReference>
<dbReference type="GO" id="GO:0003724">
    <property type="term" value="F:RNA helicase activity"/>
    <property type="evidence" value="ECO:0007669"/>
    <property type="project" value="UniProtKB-EC"/>
</dbReference>
<dbReference type="CDD" id="cd18785">
    <property type="entry name" value="SF2_C"/>
    <property type="match status" value="1"/>
</dbReference>
<dbReference type="Gene3D" id="3.40.50.300">
    <property type="entry name" value="P-loop containing nucleotide triphosphate hydrolases"/>
    <property type="match status" value="2"/>
</dbReference>
<dbReference type="InterPro" id="IPR006935">
    <property type="entry name" value="Helicase/UvrB_N"/>
</dbReference>
<dbReference type="InterPro" id="IPR014001">
    <property type="entry name" value="Helicase_ATP-bd"/>
</dbReference>
<dbReference type="InterPro" id="IPR001650">
    <property type="entry name" value="Helicase_C-like"/>
</dbReference>
<dbReference type="InterPro" id="IPR027417">
    <property type="entry name" value="P-loop_NTPase"/>
</dbReference>
<dbReference type="Pfam" id="PF00271">
    <property type="entry name" value="Helicase_C"/>
    <property type="match status" value="1"/>
</dbReference>
<dbReference type="Pfam" id="PF04851">
    <property type="entry name" value="ResIII"/>
    <property type="match status" value="1"/>
</dbReference>
<dbReference type="SMART" id="SM00487">
    <property type="entry name" value="DEXDc"/>
    <property type="match status" value="1"/>
</dbReference>
<dbReference type="SUPFAM" id="SSF52540">
    <property type="entry name" value="P-loop containing nucleoside triphosphate hydrolases"/>
    <property type="match status" value="2"/>
</dbReference>
<dbReference type="PROSITE" id="PS51192">
    <property type="entry name" value="HELICASE_ATP_BIND_1"/>
    <property type="match status" value="1"/>
</dbReference>